<dbReference type="EC" id="3.2.2.-" evidence="1"/>
<dbReference type="EMBL" id="AF308674">
    <property type="protein sequence ID" value="AAL08847.1"/>
    <property type="molecule type" value="Genomic_DNA"/>
</dbReference>
<dbReference type="RefSeq" id="WP_065433393.1">
    <property type="nucleotide sequence ID" value="NZ_BDDK01000029.1"/>
</dbReference>
<dbReference type="SMR" id="Q93FQ6"/>
<dbReference type="GO" id="GO:0003905">
    <property type="term" value="F:alkylbase DNA N-glycosylase activity"/>
    <property type="evidence" value="ECO:0007669"/>
    <property type="project" value="InterPro"/>
</dbReference>
<dbReference type="GO" id="GO:0003677">
    <property type="term" value="F:DNA binding"/>
    <property type="evidence" value="ECO:0007669"/>
    <property type="project" value="InterPro"/>
</dbReference>
<dbReference type="GO" id="GO:0006284">
    <property type="term" value="P:base-excision repair"/>
    <property type="evidence" value="ECO:0007669"/>
    <property type="project" value="InterPro"/>
</dbReference>
<dbReference type="CDD" id="cd00540">
    <property type="entry name" value="AAG"/>
    <property type="match status" value="1"/>
</dbReference>
<dbReference type="Gene3D" id="3.10.300.10">
    <property type="entry name" value="Methylpurine-DNA glycosylase (MPG)"/>
    <property type="match status" value="1"/>
</dbReference>
<dbReference type="HAMAP" id="MF_00527">
    <property type="entry name" value="3MGH"/>
    <property type="match status" value="1"/>
</dbReference>
<dbReference type="InterPro" id="IPR011034">
    <property type="entry name" value="Formyl_transferase-like_C_sf"/>
</dbReference>
<dbReference type="InterPro" id="IPR003180">
    <property type="entry name" value="MPG"/>
</dbReference>
<dbReference type="InterPro" id="IPR036995">
    <property type="entry name" value="MPG_sf"/>
</dbReference>
<dbReference type="NCBIfam" id="TIGR00567">
    <property type="entry name" value="3mg"/>
    <property type="match status" value="1"/>
</dbReference>
<dbReference type="NCBIfam" id="NF002004">
    <property type="entry name" value="PRK00802.1-4"/>
    <property type="match status" value="1"/>
</dbReference>
<dbReference type="PANTHER" id="PTHR10429">
    <property type="entry name" value="DNA-3-METHYLADENINE GLYCOSYLASE"/>
    <property type="match status" value="1"/>
</dbReference>
<dbReference type="PANTHER" id="PTHR10429:SF0">
    <property type="entry name" value="DNA-3-METHYLADENINE GLYCOSYLASE"/>
    <property type="match status" value="1"/>
</dbReference>
<dbReference type="Pfam" id="PF02245">
    <property type="entry name" value="Pur_DNA_glyco"/>
    <property type="match status" value="1"/>
</dbReference>
<dbReference type="SUPFAM" id="SSF50486">
    <property type="entry name" value="FMT C-terminal domain-like"/>
    <property type="match status" value="1"/>
</dbReference>
<organism>
    <name type="scientific">Ehrlichia ruminantium</name>
    <name type="common">Cowdria ruminantium</name>
    <dbReference type="NCBI Taxonomy" id="779"/>
    <lineage>
        <taxon>Bacteria</taxon>
        <taxon>Pseudomonadati</taxon>
        <taxon>Pseudomonadota</taxon>
        <taxon>Alphaproteobacteria</taxon>
        <taxon>Rickettsiales</taxon>
        <taxon>Anaplasmataceae</taxon>
        <taxon>Ehrlichia</taxon>
    </lineage>
</organism>
<comment type="similarity">
    <text evidence="1">Belongs to the DNA glycosylase MPG family.</text>
</comment>
<feature type="chain" id="PRO_0000100084" description="Putative 3-methyladenine DNA glycosylase">
    <location>
        <begin position="1"/>
        <end position="188"/>
    </location>
</feature>
<accession>Q93FQ6</accession>
<keyword id="KW-0227">DNA damage</keyword>
<keyword id="KW-0234">DNA repair</keyword>
<keyword id="KW-0378">Hydrolase</keyword>
<evidence type="ECO:0000255" key="1">
    <source>
        <dbReference type="HAMAP-Rule" id="MF_00527"/>
    </source>
</evidence>
<name>3MGH_EHRRU</name>
<reference key="1">
    <citation type="journal article" date="2001" name="Gene">
        <title>A subset of Cowdria ruminantium genes important for immune recognition and protection.</title>
        <authorList>
            <person name="Barbet A.F."/>
            <person name="Whitmire W.M."/>
            <person name="Kamper S.M."/>
            <person name="Simbi B.H."/>
            <person name="Ganta R.R."/>
            <person name="Moreland A.L."/>
            <person name="Mwangi D.M."/>
            <person name="McGuire T.C."/>
            <person name="Mahan S.M."/>
        </authorList>
    </citation>
    <scope>NUCLEOTIDE SEQUENCE [GENOMIC DNA]</scope>
    <source>
        <strain>Highway</strain>
    </source>
</reference>
<proteinExistence type="inferred from homology"/>
<protein>
    <recommendedName>
        <fullName evidence="1">Putative 3-methyladenine DNA glycosylase</fullName>
        <ecNumber evidence="1">3.2.2.-</ecNumber>
    </recommendedName>
</protein>
<sequence>MYNILKKSFYKQKSLDVASSLLGKMLLFNQHKGIITETEAYIGQDDQAAHSFHGYTKRTAVMFGNPGFSYVYLIYGMYHCLNVVTEPEGFPAAILIRSIILLSKNTPHTKVNGPGKICKTLHITKEHNNIDMTANHSFCICNTNLNIDDYICTPRIGISKATDKFWRFVIPDVTSLQYIDTKLVPTLT</sequence>